<protein>
    <recommendedName>
        <fullName evidence="1">Small ribosomal subunit protein uS14</fullName>
    </recommendedName>
    <alternativeName>
        <fullName evidence="2">30S ribosomal protein S14</fullName>
    </alternativeName>
</protein>
<keyword id="KW-1185">Reference proteome</keyword>
<keyword id="KW-0687">Ribonucleoprotein</keyword>
<keyword id="KW-0689">Ribosomal protein</keyword>
<keyword id="KW-0694">RNA-binding</keyword>
<keyword id="KW-0699">rRNA-binding</keyword>
<proteinExistence type="inferred from homology"/>
<comment type="function">
    <text evidence="1">Binds 16S rRNA, required for the assembly of 30S particles and may also be responsible for determining the conformation of the 16S rRNA at the A site.</text>
</comment>
<comment type="subunit">
    <text evidence="1">Part of the 30S ribosomal subunit. Contacts proteins S3 and S10.</text>
</comment>
<comment type="similarity">
    <text evidence="1">Belongs to the universal ribosomal protein uS14 family.</text>
</comment>
<name>RS14_RIPO1</name>
<dbReference type="EMBL" id="CP001287">
    <property type="protein sequence ID" value="ACK65640.1"/>
    <property type="molecule type" value="Genomic_DNA"/>
</dbReference>
<dbReference type="RefSeq" id="WP_012594913.1">
    <property type="nucleotide sequence ID" value="NC_011726.1"/>
</dbReference>
<dbReference type="SMR" id="B7JUU6"/>
<dbReference type="STRING" id="41431.PCC8801_1588"/>
<dbReference type="KEGG" id="cyp:PCC8801_1588"/>
<dbReference type="eggNOG" id="COG0199">
    <property type="taxonomic scope" value="Bacteria"/>
</dbReference>
<dbReference type="HOGENOM" id="CLU_139869_0_1_3"/>
<dbReference type="OrthoDB" id="9810484at2"/>
<dbReference type="Proteomes" id="UP000008204">
    <property type="component" value="Chromosome"/>
</dbReference>
<dbReference type="GO" id="GO:0005737">
    <property type="term" value="C:cytoplasm"/>
    <property type="evidence" value="ECO:0007669"/>
    <property type="project" value="UniProtKB-ARBA"/>
</dbReference>
<dbReference type="GO" id="GO:0015935">
    <property type="term" value="C:small ribosomal subunit"/>
    <property type="evidence" value="ECO:0007669"/>
    <property type="project" value="TreeGrafter"/>
</dbReference>
<dbReference type="GO" id="GO:0019843">
    <property type="term" value="F:rRNA binding"/>
    <property type="evidence" value="ECO:0007669"/>
    <property type="project" value="UniProtKB-UniRule"/>
</dbReference>
<dbReference type="GO" id="GO:0003735">
    <property type="term" value="F:structural constituent of ribosome"/>
    <property type="evidence" value="ECO:0007669"/>
    <property type="project" value="InterPro"/>
</dbReference>
<dbReference type="GO" id="GO:0006412">
    <property type="term" value="P:translation"/>
    <property type="evidence" value="ECO:0007669"/>
    <property type="project" value="UniProtKB-UniRule"/>
</dbReference>
<dbReference type="FunFam" id="1.10.287.1480:FF:000001">
    <property type="entry name" value="30S ribosomal protein S14"/>
    <property type="match status" value="1"/>
</dbReference>
<dbReference type="Gene3D" id="1.10.287.1480">
    <property type="match status" value="1"/>
</dbReference>
<dbReference type="HAMAP" id="MF_00537">
    <property type="entry name" value="Ribosomal_uS14_1"/>
    <property type="match status" value="1"/>
</dbReference>
<dbReference type="InterPro" id="IPR001209">
    <property type="entry name" value="Ribosomal_uS14"/>
</dbReference>
<dbReference type="InterPro" id="IPR023036">
    <property type="entry name" value="Ribosomal_uS14_bac/plastid"/>
</dbReference>
<dbReference type="InterPro" id="IPR018271">
    <property type="entry name" value="Ribosomal_uS14_CS"/>
</dbReference>
<dbReference type="NCBIfam" id="NF006477">
    <property type="entry name" value="PRK08881.1"/>
    <property type="match status" value="1"/>
</dbReference>
<dbReference type="PANTHER" id="PTHR19836">
    <property type="entry name" value="30S RIBOSOMAL PROTEIN S14"/>
    <property type="match status" value="1"/>
</dbReference>
<dbReference type="PANTHER" id="PTHR19836:SF19">
    <property type="entry name" value="SMALL RIBOSOMAL SUBUNIT PROTEIN US14M"/>
    <property type="match status" value="1"/>
</dbReference>
<dbReference type="Pfam" id="PF00253">
    <property type="entry name" value="Ribosomal_S14"/>
    <property type="match status" value="1"/>
</dbReference>
<dbReference type="SUPFAM" id="SSF57716">
    <property type="entry name" value="Glucocorticoid receptor-like (DNA-binding domain)"/>
    <property type="match status" value="1"/>
</dbReference>
<dbReference type="PROSITE" id="PS00527">
    <property type="entry name" value="RIBOSOMAL_S14"/>
    <property type="match status" value="1"/>
</dbReference>
<reference key="1">
    <citation type="journal article" date="2011" name="MBio">
        <title>Novel metabolic attributes of the genus Cyanothece, comprising a group of unicellular nitrogen-fixing Cyanobacteria.</title>
        <authorList>
            <person name="Bandyopadhyay A."/>
            <person name="Elvitigala T."/>
            <person name="Welsh E."/>
            <person name="Stockel J."/>
            <person name="Liberton M."/>
            <person name="Min H."/>
            <person name="Sherman L.A."/>
            <person name="Pakrasi H.B."/>
        </authorList>
    </citation>
    <scope>NUCLEOTIDE SEQUENCE [LARGE SCALE GENOMIC DNA]</scope>
    <source>
        <strain>PCC 8801 / RF-1</strain>
    </source>
</reference>
<organism>
    <name type="scientific">Rippkaea orientalis (strain PCC 8801 / RF-1)</name>
    <name type="common">Cyanothece sp. (strain PCC 8801)</name>
    <dbReference type="NCBI Taxonomy" id="41431"/>
    <lineage>
        <taxon>Bacteria</taxon>
        <taxon>Bacillati</taxon>
        <taxon>Cyanobacteriota</taxon>
        <taxon>Cyanophyceae</taxon>
        <taxon>Oscillatoriophycideae</taxon>
        <taxon>Chroococcales</taxon>
        <taxon>Aphanothecaceae</taxon>
        <taxon>Rippkaea</taxon>
        <taxon>Rippkaea orientalis</taxon>
    </lineage>
</organism>
<accession>B7JUU6</accession>
<sequence length="100" mass="11995">MAKKSMIEREKKRARLVEKYAAKREALKEAFHQAEDYEEKIEIHRQLQQLPRNSSPNRRRNRCWATGRPRGYYRDFGLSRNVLREWAHEGLLPGVVKSSW</sequence>
<gene>
    <name evidence="1" type="primary">rpsN</name>
    <name evidence="1" type="synonym">rps14</name>
    <name type="ordered locus">PCC8801_1588</name>
</gene>
<feature type="chain" id="PRO_1000128376" description="Small ribosomal subunit protein uS14">
    <location>
        <begin position="1"/>
        <end position="100"/>
    </location>
</feature>
<evidence type="ECO:0000255" key="1">
    <source>
        <dbReference type="HAMAP-Rule" id="MF_00537"/>
    </source>
</evidence>
<evidence type="ECO:0000305" key="2"/>